<protein>
    <recommendedName>
        <fullName evidence="1">Large ribosomal subunit protein bL32</fullName>
    </recommendedName>
    <alternativeName>
        <fullName evidence="3">50S ribosomal protein L32</fullName>
    </alternativeName>
</protein>
<evidence type="ECO:0000255" key="1">
    <source>
        <dbReference type="HAMAP-Rule" id="MF_00340"/>
    </source>
</evidence>
<evidence type="ECO:0000256" key="2">
    <source>
        <dbReference type="SAM" id="MobiDB-lite"/>
    </source>
</evidence>
<evidence type="ECO:0000305" key="3"/>
<comment type="similarity">
    <text evidence="1">Belongs to the bacterial ribosomal protein bL32 family.</text>
</comment>
<gene>
    <name evidence="1" type="primary">rpmF</name>
    <name type="ordered locus">lpl1342</name>
</gene>
<reference key="1">
    <citation type="journal article" date="2004" name="Nat. Genet.">
        <title>Evidence in the Legionella pneumophila genome for exploitation of host cell functions and high genome plasticity.</title>
        <authorList>
            <person name="Cazalet C."/>
            <person name="Rusniok C."/>
            <person name="Brueggemann H."/>
            <person name="Zidane N."/>
            <person name="Magnier A."/>
            <person name="Ma L."/>
            <person name="Tichit M."/>
            <person name="Jarraud S."/>
            <person name="Bouchier C."/>
            <person name="Vandenesch F."/>
            <person name="Kunst F."/>
            <person name="Etienne J."/>
            <person name="Glaser P."/>
            <person name="Buchrieser C."/>
        </authorList>
    </citation>
    <scope>NUCLEOTIDE SEQUENCE [LARGE SCALE GENOMIC DNA]</scope>
    <source>
        <strain>Lens</strain>
    </source>
</reference>
<sequence>MAVQQNKKSRSRRDMRRSHDALTKPTLSVDPTTGETHLRHHMTPDGYYRGKKIIDAETAYEQE</sequence>
<dbReference type="EMBL" id="CR628337">
    <property type="protein sequence ID" value="CAH15582.1"/>
    <property type="molecule type" value="Genomic_DNA"/>
</dbReference>
<dbReference type="RefSeq" id="WP_010947121.1">
    <property type="nucleotide sequence ID" value="NC_006369.1"/>
</dbReference>
<dbReference type="SMR" id="Q5WWV7"/>
<dbReference type="GeneID" id="57035381"/>
<dbReference type="KEGG" id="lpf:lpl1342"/>
<dbReference type="LegioList" id="lpl1342"/>
<dbReference type="HOGENOM" id="CLU_129084_2_1_6"/>
<dbReference type="Proteomes" id="UP000002517">
    <property type="component" value="Chromosome"/>
</dbReference>
<dbReference type="GO" id="GO:0015934">
    <property type="term" value="C:large ribosomal subunit"/>
    <property type="evidence" value="ECO:0007669"/>
    <property type="project" value="InterPro"/>
</dbReference>
<dbReference type="GO" id="GO:0003735">
    <property type="term" value="F:structural constituent of ribosome"/>
    <property type="evidence" value="ECO:0007669"/>
    <property type="project" value="InterPro"/>
</dbReference>
<dbReference type="GO" id="GO:0006412">
    <property type="term" value="P:translation"/>
    <property type="evidence" value="ECO:0007669"/>
    <property type="project" value="UniProtKB-UniRule"/>
</dbReference>
<dbReference type="HAMAP" id="MF_00340">
    <property type="entry name" value="Ribosomal_bL32"/>
    <property type="match status" value="1"/>
</dbReference>
<dbReference type="InterPro" id="IPR002677">
    <property type="entry name" value="Ribosomal_bL32"/>
</dbReference>
<dbReference type="InterPro" id="IPR044957">
    <property type="entry name" value="Ribosomal_bL32_bact"/>
</dbReference>
<dbReference type="InterPro" id="IPR011332">
    <property type="entry name" value="Ribosomal_zn-bd"/>
</dbReference>
<dbReference type="NCBIfam" id="TIGR01031">
    <property type="entry name" value="rpmF_bact"/>
    <property type="match status" value="1"/>
</dbReference>
<dbReference type="PANTHER" id="PTHR35534">
    <property type="entry name" value="50S RIBOSOMAL PROTEIN L32"/>
    <property type="match status" value="1"/>
</dbReference>
<dbReference type="PANTHER" id="PTHR35534:SF1">
    <property type="entry name" value="LARGE RIBOSOMAL SUBUNIT PROTEIN BL32"/>
    <property type="match status" value="1"/>
</dbReference>
<dbReference type="Pfam" id="PF01783">
    <property type="entry name" value="Ribosomal_L32p"/>
    <property type="match status" value="1"/>
</dbReference>
<dbReference type="SUPFAM" id="SSF57829">
    <property type="entry name" value="Zn-binding ribosomal proteins"/>
    <property type="match status" value="1"/>
</dbReference>
<accession>Q5WWV7</accession>
<proteinExistence type="inferred from homology"/>
<organism>
    <name type="scientific">Legionella pneumophila (strain Lens)</name>
    <dbReference type="NCBI Taxonomy" id="297245"/>
    <lineage>
        <taxon>Bacteria</taxon>
        <taxon>Pseudomonadati</taxon>
        <taxon>Pseudomonadota</taxon>
        <taxon>Gammaproteobacteria</taxon>
        <taxon>Legionellales</taxon>
        <taxon>Legionellaceae</taxon>
        <taxon>Legionella</taxon>
    </lineage>
</organism>
<feature type="chain" id="PRO_0000225733" description="Large ribosomal subunit protein bL32">
    <location>
        <begin position="1"/>
        <end position="63"/>
    </location>
</feature>
<feature type="region of interest" description="Disordered" evidence="2">
    <location>
        <begin position="1"/>
        <end position="45"/>
    </location>
</feature>
<feature type="compositionally biased region" description="Basic residues" evidence="2">
    <location>
        <begin position="7"/>
        <end position="16"/>
    </location>
</feature>
<feature type="compositionally biased region" description="Polar residues" evidence="2">
    <location>
        <begin position="25"/>
        <end position="35"/>
    </location>
</feature>
<name>RL32_LEGPL</name>
<keyword id="KW-0687">Ribonucleoprotein</keyword>
<keyword id="KW-0689">Ribosomal protein</keyword>